<sequence length="262" mass="28887">MPKHILIFDSGIGGLSVYKEIKYQLPLAKYIYAFDNAAFPYGELTESVLIERTTHIISKLCSKFPIDIVVIACNTASTVVLPSLREKLDIPVVGVVPAIKPAALVSNKIGLLATPATVKRSYTYDLIKSFAPISDVQLLGSTRLVEMAEEKMIGIDVDITELKEILSPWQNKVDTIVLGCTHFPFLKNEIKKALGNKILLIDSGEAIARRVKQLLNGDEVESAVLFEGEVFCSAPSIKEEALNHTFKELNFSSLQCLGYPKF</sequence>
<name>MURI_ALIF1</name>
<reference key="1">
    <citation type="journal article" date="2005" name="Proc. Natl. Acad. Sci. U.S.A.">
        <title>Complete genome sequence of Vibrio fischeri: a symbiotic bacterium with pathogenic congeners.</title>
        <authorList>
            <person name="Ruby E.G."/>
            <person name="Urbanowski M."/>
            <person name="Campbell J."/>
            <person name="Dunn A."/>
            <person name="Faini M."/>
            <person name="Gunsalus R."/>
            <person name="Lostroh P."/>
            <person name="Lupp C."/>
            <person name="McCann J."/>
            <person name="Millikan D."/>
            <person name="Schaefer A."/>
            <person name="Stabb E."/>
            <person name="Stevens A."/>
            <person name="Visick K."/>
            <person name="Whistler C."/>
            <person name="Greenberg E.P."/>
        </authorList>
    </citation>
    <scope>NUCLEOTIDE SEQUENCE [LARGE SCALE GENOMIC DNA]</scope>
    <source>
        <strain>ATCC 700601 / ES114</strain>
    </source>
</reference>
<keyword id="KW-0133">Cell shape</keyword>
<keyword id="KW-0961">Cell wall biogenesis/degradation</keyword>
<keyword id="KW-0413">Isomerase</keyword>
<keyword id="KW-0573">Peptidoglycan synthesis</keyword>
<keyword id="KW-1185">Reference proteome</keyword>
<feature type="chain" id="PRO_1000047636" description="Glutamate racemase">
    <location>
        <begin position="1"/>
        <end position="262"/>
    </location>
</feature>
<feature type="active site" description="Proton donor/acceptor" evidence="1">
    <location>
        <position position="73"/>
    </location>
</feature>
<feature type="active site" description="Proton donor/acceptor" evidence="1">
    <location>
        <position position="180"/>
    </location>
</feature>
<feature type="binding site" evidence="1">
    <location>
        <begin position="9"/>
        <end position="10"/>
    </location>
    <ligand>
        <name>substrate</name>
    </ligand>
</feature>
<feature type="binding site" evidence="1">
    <location>
        <begin position="41"/>
        <end position="42"/>
    </location>
    <ligand>
        <name>substrate</name>
    </ligand>
</feature>
<feature type="binding site" evidence="1">
    <location>
        <begin position="74"/>
        <end position="75"/>
    </location>
    <ligand>
        <name>substrate</name>
    </ligand>
</feature>
<feature type="binding site" evidence="1">
    <location>
        <begin position="181"/>
        <end position="182"/>
    </location>
    <ligand>
        <name>substrate</name>
    </ligand>
</feature>
<organism>
    <name type="scientific">Aliivibrio fischeri (strain ATCC 700601 / ES114)</name>
    <name type="common">Vibrio fischeri</name>
    <dbReference type="NCBI Taxonomy" id="312309"/>
    <lineage>
        <taxon>Bacteria</taxon>
        <taxon>Pseudomonadati</taxon>
        <taxon>Pseudomonadota</taxon>
        <taxon>Gammaproteobacteria</taxon>
        <taxon>Vibrionales</taxon>
        <taxon>Vibrionaceae</taxon>
        <taxon>Aliivibrio</taxon>
    </lineage>
</organism>
<comment type="function">
    <text evidence="1">Provides the (R)-glutamate required for cell wall biosynthesis.</text>
</comment>
<comment type="catalytic activity">
    <reaction evidence="1">
        <text>L-glutamate = D-glutamate</text>
        <dbReference type="Rhea" id="RHEA:12813"/>
        <dbReference type="ChEBI" id="CHEBI:29985"/>
        <dbReference type="ChEBI" id="CHEBI:29986"/>
        <dbReference type="EC" id="5.1.1.3"/>
    </reaction>
</comment>
<comment type="pathway">
    <text evidence="1">Cell wall biogenesis; peptidoglycan biosynthesis.</text>
</comment>
<comment type="similarity">
    <text evidence="1">Belongs to the aspartate/glutamate racemases family.</text>
</comment>
<gene>
    <name evidence="1" type="primary">murI</name>
    <name type="ordered locus">VF_2433</name>
</gene>
<dbReference type="EC" id="5.1.1.3" evidence="1"/>
<dbReference type="EMBL" id="CP000020">
    <property type="protein sequence ID" value="AAW86928.1"/>
    <property type="molecule type" value="Genomic_DNA"/>
</dbReference>
<dbReference type="RefSeq" id="WP_011262802.1">
    <property type="nucleotide sequence ID" value="NC_006840.2"/>
</dbReference>
<dbReference type="RefSeq" id="YP_205816.1">
    <property type="nucleotide sequence ID" value="NC_006840.2"/>
</dbReference>
<dbReference type="SMR" id="Q5E218"/>
<dbReference type="STRING" id="312309.VF_2433"/>
<dbReference type="EnsemblBacteria" id="AAW86928">
    <property type="protein sequence ID" value="AAW86928"/>
    <property type="gene ID" value="VF_2433"/>
</dbReference>
<dbReference type="GeneID" id="54165164"/>
<dbReference type="KEGG" id="vfi:VF_2433"/>
<dbReference type="PATRIC" id="fig|312309.11.peg.2461"/>
<dbReference type="eggNOG" id="COG0796">
    <property type="taxonomic scope" value="Bacteria"/>
</dbReference>
<dbReference type="HOGENOM" id="CLU_052344_2_0_6"/>
<dbReference type="OrthoDB" id="9801055at2"/>
<dbReference type="UniPathway" id="UPA00219"/>
<dbReference type="Proteomes" id="UP000000537">
    <property type="component" value="Chromosome I"/>
</dbReference>
<dbReference type="GO" id="GO:0008881">
    <property type="term" value="F:glutamate racemase activity"/>
    <property type="evidence" value="ECO:0007669"/>
    <property type="project" value="UniProtKB-UniRule"/>
</dbReference>
<dbReference type="GO" id="GO:0071555">
    <property type="term" value="P:cell wall organization"/>
    <property type="evidence" value="ECO:0007669"/>
    <property type="project" value="UniProtKB-KW"/>
</dbReference>
<dbReference type="GO" id="GO:0009252">
    <property type="term" value="P:peptidoglycan biosynthetic process"/>
    <property type="evidence" value="ECO:0007669"/>
    <property type="project" value="UniProtKB-UniRule"/>
</dbReference>
<dbReference type="GO" id="GO:0008360">
    <property type="term" value="P:regulation of cell shape"/>
    <property type="evidence" value="ECO:0007669"/>
    <property type="project" value="UniProtKB-KW"/>
</dbReference>
<dbReference type="FunFam" id="3.40.50.1860:FF:000001">
    <property type="entry name" value="Glutamate racemase"/>
    <property type="match status" value="1"/>
</dbReference>
<dbReference type="Gene3D" id="3.40.50.1860">
    <property type="match status" value="2"/>
</dbReference>
<dbReference type="HAMAP" id="MF_00258">
    <property type="entry name" value="Glu_racemase"/>
    <property type="match status" value="1"/>
</dbReference>
<dbReference type="InterPro" id="IPR015942">
    <property type="entry name" value="Asp/Glu/hydantoin_racemase"/>
</dbReference>
<dbReference type="InterPro" id="IPR001920">
    <property type="entry name" value="Asp/Glu_race"/>
</dbReference>
<dbReference type="InterPro" id="IPR018187">
    <property type="entry name" value="Asp/Glu_racemase_AS_1"/>
</dbReference>
<dbReference type="InterPro" id="IPR033134">
    <property type="entry name" value="Asp/Glu_racemase_AS_2"/>
</dbReference>
<dbReference type="InterPro" id="IPR004391">
    <property type="entry name" value="Glu_race"/>
</dbReference>
<dbReference type="NCBIfam" id="TIGR00067">
    <property type="entry name" value="glut_race"/>
    <property type="match status" value="1"/>
</dbReference>
<dbReference type="PANTHER" id="PTHR21198">
    <property type="entry name" value="GLUTAMATE RACEMASE"/>
    <property type="match status" value="1"/>
</dbReference>
<dbReference type="PANTHER" id="PTHR21198:SF2">
    <property type="entry name" value="GLUTAMATE RACEMASE"/>
    <property type="match status" value="1"/>
</dbReference>
<dbReference type="Pfam" id="PF01177">
    <property type="entry name" value="Asp_Glu_race"/>
    <property type="match status" value="1"/>
</dbReference>
<dbReference type="SUPFAM" id="SSF53681">
    <property type="entry name" value="Aspartate/glutamate racemase"/>
    <property type="match status" value="2"/>
</dbReference>
<dbReference type="PROSITE" id="PS00923">
    <property type="entry name" value="ASP_GLU_RACEMASE_1"/>
    <property type="match status" value="1"/>
</dbReference>
<dbReference type="PROSITE" id="PS00924">
    <property type="entry name" value="ASP_GLU_RACEMASE_2"/>
    <property type="match status" value="1"/>
</dbReference>
<protein>
    <recommendedName>
        <fullName evidence="1">Glutamate racemase</fullName>
        <ecNumber evidence="1">5.1.1.3</ecNumber>
    </recommendedName>
</protein>
<proteinExistence type="inferred from homology"/>
<accession>Q5E218</accession>
<evidence type="ECO:0000255" key="1">
    <source>
        <dbReference type="HAMAP-Rule" id="MF_00258"/>
    </source>
</evidence>